<gene>
    <name type="primary">bipB</name>
    <name type="ordered locus">BMA10229_2071</name>
</gene>
<dbReference type="EMBL" id="CP000545">
    <property type="protein sequence ID" value="ABM99594.2"/>
    <property type="molecule type" value="Genomic_DNA"/>
</dbReference>
<dbReference type="RefSeq" id="WP_004533397.1">
    <property type="nucleotide sequence ID" value="NC_008835.1"/>
</dbReference>
<dbReference type="SMR" id="A2S1Q0"/>
<dbReference type="GeneID" id="93063712"/>
<dbReference type="KEGG" id="bml:BMA10229_2071"/>
<dbReference type="HOGENOM" id="CLU_027418_0_0_4"/>
<dbReference type="Proteomes" id="UP000002283">
    <property type="component" value="Chromosome II"/>
</dbReference>
<dbReference type="GO" id="GO:0005576">
    <property type="term" value="C:extracellular region"/>
    <property type="evidence" value="ECO:0007669"/>
    <property type="project" value="UniProtKB-SubCell"/>
</dbReference>
<dbReference type="GO" id="GO:0033644">
    <property type="term" value="C:host cell membrane"/>
    <property type="evidence" value="ECO:0007669"/>
    <property type="project" value="UniProtKB-SubCell"/>
</dbReference>
<dbReference type="GO" id="GO:0016020">
    <property type="term" value="C:membrane"/>
    <property type="evidence" value="ECO:0007669"/>
    <property type="project" value="UniProtKB-KW"/>
</dbReference>
<dbReference type="Gene3D" id="1.20.120.330">
    <property type="entry name" value="Nucleotidyltransferases domain 2"/>
    <property type="match status" value="2"/>
</dbReference>
<dbReference type="InterPro" id="IPR006972">
    <property type="entry name" value="BipB-like_C"/>
</dbReference>
<dbReference type="InterPro" id="IPR032391">
    <property type="entry name" value="IpaB/BipB/SctE_N"/>
</dbReference>
<dbReference type="InterPro" id="IPR003895">
    <property type="entry name" value="T3SS_SctE/BipB"/>
</dbReference>
<dbReference type="Pfam" id="PF04888">
    <property type="entry name" value="SseC"/>
    <property type="match status" value="1"/>
</dbReference>
<dbReference type="Pfam" id="PF16535">
    <property type="entry name" value="T3SSipB"/>
    <property type="match status" value="1"/>
</dbReference>
<dbReference type="PRINTS" id="PR01375">
    <property type="entry name" value="BACINVASINB"/>
</dbReference>
<sequence length="620" mass="64680">MSSGVQGGPAANANAYQTHPLRDAASALGTLSPQAYVDVVSAAQRNFLERMSQLASEQCDAQPAAHDARLDDRPALRAPQERDAPPLGASDTGSRASGAAKLTELLGVLMSVISASSLDELKQRSDIWNQMSKAAQDNLSRLSDAFQRATDEAKAAADAAEQAAAAAKQAGADAKAADAAVDAAQKRYDDAVKQGLPDDRLQSLKAALEQARQQAGDAHGRADALQADATKKLDAASALATQARACEQQVDDAVNQATQQYGASASLRTPQSPRLSGAAELTAVLGKLQELISSGNVKELESKQKLFTEMQAKREAELQKKSDEYQAQVKKAEEMQKTMGCIGKIVGWVITAVSFAAAAFTGGASLALAAVGLALAVGDEISRATTGVSFMDKLMQPVMDAILKPLMEMISSLITKALVACGVDQQKAELAGAILGAVVTGVALVAAAFVGASAVKAVASKVIDAMAGQLTKLMDSAIGKMLVQLIEKFSEKSGLQALGSRTATAMTRMRRAIGVEAKEDGMLLANRFEKAGTVMNVGNQVSQAAGGIVVGVERAKAMGLLADVKEAMYDIKLLGDLLKQAVDAFAEHNRVLAQLMQQMSDAGEMQTSTGKLILRNARAV</sequence>
<feature type="chain" id="PRO_0000343988" description="Translocator protein BipB">
    <location>
        <begin position="1"/>
        <end position="620"/>
    </location>
</feature>
<feature type="transmembrane region" description="Helical" evidence="2">
    <location>
        <begin position="355"/>
        <end position="375"/>
    </location>
</feature>
<feature type="transmembrane region" description="Helical" evidence="2">
    <location>
        <begin position="401"/>
        <end position="421"/>
    </location>
</feature>
<feature type="transmembrane region" description="Helical" evidence="2">
    <location>
        <begin position="430"/>
        <end position="450"/>
    </location>
</feature>
<feature type="region of interest" description="Disordered" evidence="3">
    <location>
        <begin position="58"/>
        <end position="95"/>
    </location>
</feature>
<feature type="coiled-coil region" evidence="2">
    <location>
        <begin position="309"/>
        <end position="339"/>
    </location>
</feature>
<feature type="compositionally biased region" description="Basic and acidic residues" evidence="3">
    <location>
        <begin position="66"/>
        <end position="84"/>
    </location>
</feature>
<comment type="function">
    <text evidence="1">Plays a role in the bacterium-induced formation of multinucleated giant cell (MNGC), which is formed after host cell fusion, as well as in the intercellular spreading of bacteria and in the induction of apoptosis in macrophages. May act in concert with other effector proteins to induce fusion of host cell membranes (By similarity).</text>
</comment>
<comment type="subcellular location">
    <subcellularLocation>
        <location evidence="1">Secreted</location>
    </subcellularLocation>
    <subcellularLocation>
        <location evidence="1">Host membrane</location>
    </subcellularLocation>
    <text evidence="1">Secreted via the bsa type III secretion system, and probably inserted into host membranes.</text>
</comment>
<comment type="similarity">
    <text evidence="4">Belongs to the SctE/SipB/YopB family.</text>
</comment>
<keyword id="KW-0175">Coiled coil</keyword>
<keyword id="KW-1043">Host membrane</keyword>
<keyword id="KW-0472">Membrane</keyword>
<keyword id="KW-0964">Secreted</keyword>
<keyword id="KW-0812">Transmembrane</keyword>
<keyword id="KW-1133">Transmembrane helix</keyword>
<keyword id="KW-0843">Virulence</keyword>
<organism>
    <name type="scientific">Burkholderia mallei (strain NCTC 10229)</name>
    <dbReference type="NCBI Taxonomy" id="412022"/>
    <lineage>
        <taxon>Bacteria</taxon>
        <taxon>Pseudomonadati</taxon>
        <taxon>Pseudomonadota</taxon>
        <taxon>Betaproteobacteria</taxon>
        <taxon>Burkholderiales</taxon>
        <taxon>Burkholderiaceae</taxon>
        <taxon>Burkholderia</taxon>
        <taxon>pseudomallei group</taxon>
    </lineage>
</organism>
<evidence type="ECO:0000250" key="1"/>
<evidence type="ECO:0000255" key="2"/>
<evidence type="ECO:0000256" key="3">
    <source>
        <dbReference type="SAM" id="MobiDB-lite"/>
    </source>
</evidence>
<evidence type="ECO:0000305" key="4"/>
<proteinExistence type="inferred from homology"/>
<reference key="1">
    <citation type="journal article" date="2010" name="Genome Biol. Evol.">
        <title>Continuing evolution of Burkholderia mallei through genome reduction and large-scale rearrangements.</title>
        <authorList>
            <person name="Losada L."/>
            <person name="Ronning C.M."/>
            <person name="DeShazer D."/>
            <person name="Woods D."/>
            <person name="Fedorova N."/>
            <person name="Kim H.S."/>
            <person name="Shabalina S.A."/>
            <person name="Pearson T.R."/>
            <person name="Brinkac L."/>
            <person name="Tan P."/>
            <person name="Nandi T."/>
            <person name="Crabtree J."/>
            <person name="Badger J."/>
            <person name="Beckstrom-Sternberg S."/>
            <person name="Saqib M."/>
            <person name="Schutzer S.E."/>
            <person name="Keim P."/>
            <person name="Nierman W.C."/>
        </authorList>
    </citation>
    <scope>NUCLEOTIDE SEQUENCE [LARGE SCALE GENOMIC DNA]</scope>
    <source>
        <strain>NCTC 10229</strain>
    </source>
</reference>
<accession>A2S1Q0</accession>
<name>BIPB_BURM9</name>
<protein>
    <recommendedName>
        <fullName>Translocator protein BipB</fullName>
    </recommendedName>
</protein>